<comment type="miscellaneous">
    <text evidence="1">Partially overlaps AAR2.</text>
</comment>
<comment type="caution">
    <text evidence="2">Product of a dubious gene prediction unlikely to encode a functional protein. Because of that it is not part of the S.cerevisiae S288c complete/reference proteome set.</text>
</comment>
<evidence type="ECO:0000305" key="1"/>
<evidence type="ECO:0000305" key="2">
    <source>
    </source>
</evidence>
<sequence>MLKMNDMNVSNGDVLDSVKWLILLDIKGILIDPYSYLNRSRCKWYSIHCRLPIFYFLAPCPSDKEDLWCPFISLNPKPLKYSCSCVAIFSAFKMCPFFISWFL</sequence>
<proteinExistence type="uncertain"/>
<feature type="chain" id="PRO_0000202449" description="Putative uncharacterized protein YBL073W">
    <location>
        <begin position="1"/>
        <end position="103"/>
    </location>
</feature>
<name>YBH3_YEAST</name>
<reference key="1">
    <citation type="journal article" date="1994" name="Yeast">
        <title>The two genes encoding yeast ribosomal protein S8 reside on different chromosomes, and are closely linked to the hsp70 stress protein genes SSA3 and SSA4.</title>
        <authorList>
            <person name="Logghe M."/>
            <person name="Molemans F."/>
            <person name="Fiers W."/>
            <person name="Contreras R."/>
        </authorList>
    </citation>
    <scope>NUCLEOTIDE SEQUENCE [GENOMIC DNA]</scope>
    <source>
        <strain>ATCC 204508 / S288c</strain>
    </source>
</reference>
<reference key="2">
    <citation type="journal article" date="1994" name="EMBO J.">
        <title>Complete DNA sequence of yeast chromosome II.</title>
        <authorList>
            <person name="Feldmann H."/>
            <person name="Aigle M."/>
            <person name="Aljinovic G."/>
            <person name="Andre B."/>
            <person name="Baclet M.C."/>
            <person name="Barthe C."/>
            <person name="Baur A."/>
            <person name="Becam A.-M."/>
            <person name="Biteau N."/>
            <person name="Boles E."/>
            <person name="Brandt T."/>
            <person name="Brendel M."/>
            <person name="Brueckner M."/>
            <person name="Bussereau F."/>
            <person name="Christiansen C."/>
            <person name="Contreras R."/>
            <person name="Crouzet M."/>
            <person name="Cziepluch C."/>
            <person name="Demolis N."/>
            <person name="Delaveau T."/>
            <person name="Doignon F."/>
            <person name="Domdey H."/>
            <person name="Duesterhus S."/>
            <person name="Dubois E."/>
            <person name="Dujon B."/>
            <person name="El Bakkoury M."/>
            <person name="Entian K.-D."/>
            <person name="Feuermann M."/>
            <person name="Fiers W."/>
            <person name="Fobo G.M."/>
            <person name="Fritz C."/>
            <person name="Gassenhuber J."/>
            <person name="Glansdorff N."/>
            <person name="Goffeau A."/>
            <person name="Grivell L.A."/>
            <person name="de Haan M."/>
            <person name="Hein C."/>
            <person name="Herbert C.J."/>
            <person name="Hollenberg C.P."/>
            <person name="Holmstroem K."/>
            <person name="Jacq C."/>
            <person name="Jacquet M."/>
            <person name="Jauniaux J.-C."/>
            <person name="Jonniaux J.-L."/>
            <person name="Kallesoee T."/>
            <person name="Kiesau P."/>
            <person name="Kirchrath L."/>
            <person name="Koetter P."/>
            <person name="Korol S."/>
            <person name="Liebl S."/>
            <person name="Logghe M."/>
            <person name="Lohan A.J.E."/>
            <person name="Louis E.J."/>
            <person name="Li Z.Y."/>
            <person name="Maat M.J."/>
            <person name="Mallet L."/>
            <person name="Mannhaupt G."/>
            <person name="Messenguy F."/>
            <person name="Miosga T."/>
            <person name="Molemans F."/>
            <person name="Mueller S."/>
            <person name="Nasr F."/>
            <person name="Obermaier B."/>
            <person name="Perea J."/>
            <person name="Pierard A."/>
            <person name="Piravandi E."/>
            <person name="Pohl F.M."/>
            <person name="Pohl T.M."/>
            <person name="Potier S."/>
            <person name="Proft M."/>
            <person name="Purnelle B."/>
            <person name="Ramezani Rad M."/>
            <person name="Rieger M."/>
            <person name="Rose M."/>
            <person name="Schaaff-Gerstenschlaeger I."/>
            <person name="Scherens B."/>
            <person name="Schwarzlose C."/>
            <person name="Skala J."/>
            <person name="Slonimski P.P."/>
            <person name="Smits P.H.M."/>
            <person name="Souciet J.-L."/>
            <person name="Steensma H.Y."/>
            <person name="Stucka R."/>
            <person name="Urrestarazu L.A."/>
            <person name="van der Aart Q.J.M."/>
            <person name="Van Dyck L."/>
            <person name="Vassarotti A."/>
            <person name="Vetter I."/>
            <person name="Vierendeels F."/>
            <person name="Vissers S."/>
            <person name="Wagner G."/>
            <person name="de Wergifosse P."/>
            <person name="Wolfe K.H."/>
            <person name="Zagulski M."/>
            <person name="Zimmermann F.K."/>
            <person name="Mewes H.-W."/>
            <person name="Kleine K."/>
        </authorList>
    </citation>
    <scope>NUCLEOTIDE SEQUENCE [LARGE SCALE GENOMIC DNA]</scope>
    <source>
        <strain>ATCC 204508 / S288c</strain>
    </source>
</reference>
<reference key="3">
    <citation type="journal article" date="2014" name="G3 (Bethesda)">
        <title>The reference genome sequence of Saccharomyces cerevisiae: Then and now.</title>
        <authorList>
            <person name="Engel S.R."/>
            <person name="Dietrich F.S."/>
            <person name="Fisk D.G."/>
            <person name="Binkley G."/>
            <person name="Balakrishnan R."/>
            <person name="Costanzo M.C."/>
            <person name="Dwight S.S."/>
            <person name="Hitz B.C."/>
            <person name="Karra K."/>
            <person name="Nash R.S."/>
            <person name="Weng S."/>
            <person name="Wong E.D."/>
            <person name="Lloyd P."/>
            <person name="Skrzypek M.S."/>
            <person name="Miyasato S.R."/>
            <person name="Simison M."/>
            <person name="Cherry J.M."/>
        </authorList>
    </citation>
    <scope>GENOME REANNOTATION</scope>
    <source>
        <strain>ATCC 204508 / S288c</strain>
    </source>
</reference>
<reference key="4">
    <citation type="journal article" date="2007" name="Genome Res.">
        <title>Approaching a complete repository of sequence-verified protein-encoding clones for Saccharomyces cerevisiae.</title>
        <authorList>
            <person name="Hu Y."/>
            <person name="Rolfs A."/>
            <person name="Bhullar B."/>
            <person name="Murthy T.V.S."/>
            <person name="Zhu C."/>
            <person name="Berger M.F."/>
            <person name="Camargo A.A."/>
            <person name="Kelley F."/>
            <person name="McCarron S."/>
            <person name="Jepson D."/>
            <person name="Richardson A."/>
            <person name="Raphael J."/>
            <person name="Moreira D."/>
            <person name="Taycher E."/>
            <person name="Zuo D."/>
            <person name="Mohr S."/>
            <person name="Kane M.F."/>
            <person name="Williamson J."/>
            <person name="Simpson A.J.G."/>
            <person name="Bulyk M.L."/>
            <person name="Harlow E."/>
            <person name="Marsischky G."/>
            <person name="Kolodner R.D."/>
            <person name="LaBaer J."/>
        </authorList>
    </citation>
    <scope>NUCLEOTIDE SEQUENCE [GENOMIC DNA]</scope>
    <source>
        <strain>ATCC 204508 / S288c</strain>
    </source>
</reference>
<accession>P38184</accession>
<gene>
    <name type="ordered locus">YBL073W</name>
    <name type="ORF">YBL0612</name>
</gene>
<dbReference type="EMBL" id="Z26879">
    <property type="status" value="NOT_ANNOTATED_CDS"/>
    <property type="molecule type" value="Genomic_DNA"/>
</dbReference>
<dbReference type="EMBL" id="Z35835">
    <property type="protein sequence ID" value="CAA84895.1"/>
    <property type="molecule type" value="Genomic_DNA"/>
</dbReference>
<dbReference type="EMBL" id="AY693349">
    <property type="protein sequence ID" value="AAT93368.1"/>
    <property type="molecule type" value="Genomic_DNA"/>
</dbReference>
<dbReference type="PIR" id="S45809">
    <property type="entry name" value="S45809"/>
</dbReference>
<dbReference type="PaxDb" id="4932-YBL073W"/>
<dbReference type="EnsemblFungi" id="YBL073W_mRNA">
    <property type="protein sequence ID" value="YBL073W"/>
    <property type="gene ID" value="YBL073W"/>
</dbReference>
<dbReference type="AGR" id="SGD:S000000169"/>
<dbReference type="SGD" id="S000000169">
    <property type="gene designation" value="YBL073W"/>
</dbReference>
<dbReference type="HOGENOM" id="CLU_2265807_0_0_1"/>
<organism>
    <name type="scientific">Saccharomyces cerevisiae (strain ATCC 204508 / S288c)</name>
    <name type="common">Baker's yeast</name>
    <dbReference type="NCBI Taxonomy" id="559292"/>
    <lineage>
        <taxon>Eukaryota</taxon>
        <taxon>Fungi</taxon>
        <taxon>Dikarya</taxon>
        <taxon>Ascomycota</taxon>
        <taxon>Saccharomycotina</taxon>
        <taxon>Saccharomycetes</taxon>
        <taxon>Saccharomycetales</taxon>
        <taxon>Saccharomycetaceae</taxon>
        <taxon>Saccharomyces</taxon>
    </lineage>
</organism>
<protein>
    <recommendedName>
        <fullName>Putative uncharacterized protein YBL073W</fullName>
    </recommendedName>
</protein>